<dbReference type="EMBL" id="AC005496">
    <property type="protein sequence ID" value="AAC35219.1"/>
    <property type="molecule type" value="Genomic_DNA"/>
</dbReference>
<dbReference type="EMBL" id="CP002685">
    <property type="protein sequence ID" value="AEC08308.1"/>
    <property type="molecule type" value="Genomic_DNA"/>
</dbReference>
<dbReference type="PIR" id="A84701">
    <property type="entry name" value="A84701"/>
</dbReference>
<dbReference type="RefSeq" id="NP_180543.1">
    <property type="nucleotide sequence ID" value="NM_128536.1"/>
</dbReference>
<dbReference type="SMR" id="O82374"/>
<dbReference type="BioGRID" id="2882">
    <property type="interactions" value="1"/>
</dbReference>
<dbReference type="PaxDb" id="3702-AT2G29820.1"/>
<dbReference type="EnsemblPlants" id="AT2G29820.1">
    <property type="protein sequence ID" value="AT2G29820.1"/>
    <property type="gene ID" value="AT2G29820"/>
</dbReference>
<dbReference type="GeneID" id="817532"/>
<dbReference type="Gramene" id="AT2G29820.1">
    <property type="protein sequence ID" value="AT2G29820.1"/>
    <property type="gene ID" value="AT2G29820"/>
</dbReference>
<dbReference type="KEGG" id="ath:AT2G29820"/>
<dbReference type="Araport" id="AT2G29820"/>
<dbReference type="TAIR" id="AT2G29820"/>
<dbReference type="eggNOG" id="KOG1072">
    <property type="taxonomic scope" value="Eukaryota"/>
</dbReference>
<dbReference type="HOGENOM" id="CLU_032521_1_1_1"/>
<dbReference type="InParanoid" id="O82374"/>
<dbReference type="OMA" id="ATTESWE"/>
<dbReference type="PhylomeDB" id="O82374"/>
<dbReference type="PRO" id="PR:O82374"/>
<dbReference type="Proteomes" id="UP000006548">
    <property type="component" value="Chromosome 2"/>
</dbReference>
<dbReference type="ExpressionAtlas" id="O82374">
    <property type="expression patterns" value="differential"/>
</dbReference>
<dbReference type="Gene3D" id="2.120.10.80">
    <property type="entry name" value="Kelch-type beta propeller"/>
    <property type="match status" value="1"/>
</dbReference>
<dbReference type="InterPro" id="IPR036047">
    <property type="entry name" value="F-box-like_dom_sf"/>
</dbReference>
<dbReference type="InterPro" id="IPR050354">
    <property type="entry name" value="F-box/kelch-repeat_ARATH"/>
</dbReference>
<dbReference type="InterPro" id="IPR001810">
    <property type="entry name" value="F-box_dom"/>
</dbReference>
<dbReference type="InterPro" id="IPR015915">
    <property type="entry name" value="Kelch-typ_b-propeller"/>
</dbReference>
<dbReference type="InterPro" id="IPR006652">
    <property type="entry name" value="Kelch_1"/>
</dbReference>
<dbReference type="PANTHER" id="PTHR24414:SF65">
    <property type="entry name" value="F-BOX DOMAIN-CONTAINING PROTEIN"/>
    <property type="match status" value="1"/>
</dbReference>
<dbReference type="PANTHER" id="PTHR24414">
    <property type="entry name" value="F-BOX/KELCH-REPEAT PROTEIN SKIP4"/>
    <property type="match status" value="1"/>
</dbReference>
<dbReference type="Pfam" id="PF00646">
    <property type="entry name" value="F-box"/>
    <property type="match status" value="1"/>
</dbReference>
<dbReference type="Pfam" id="PF25210">
    <property type="entry name" value="Kelch_FKB95"/>
    <property type="match status" value="1"/>
</dbReference>
<dbReference type="SMART" id="SM00612">
    <property type="entry name" value="Kelch"/>
    <property type="match status" value="2"/>
</dbReference>
<dbReference type="SUPFAM" id="SSF81383">
    <property type="entry name" value="F-box domain"/>
    <property type="match status" value="1"/>
</dbReference>
<dbReference type="SUPFAM" id="SSF117281">
    <property type="entry name" value="Kelch motif"/>
    <property type="match status" value="1"/>
</dbReference>
<dbReference type="PROSITE" id="PS50181">
    <property type="entry name" value="FBOX"/>
    <property type="match status" value="1"/>
</dbReference>
<gene>
    <name type="ordered locus">At2g29820</name>
    <name type="ORF">T27A16.8</name>
</gene>
<organism>
    <name type="scientific">Arabidopsis thaliana</name>
    <name type="common">Mouse-ear cress</name>
    <dbReference type="NCBI Taxonomy" id="3702"/>
    <lineage>
        <taxon>Eukaryota</taxon>
        <taxon>Viridiplantae</taxon>
        <taxon>Streptophyta</taxon>
        <taxon>Embryophyta</taxon>
        <taxon>Tracheophyta</taxon>
        <taxon>Spermatophyta</taxon>
        <taxon>Magnoliopsida</taxon>
        <taxon>eudicotyledons</taxon>
        <taxon>Gunneridae</taxon>
        <taxon>Pentapetalae</taxon>
        <taxon>rosids</taxon>
        <taxon>malvids</taxon>
        <taxon>Brassicales</taxon>
        <taxon>Brassicaceae</taxon>
        <taxon>Camelineae</taxon>
        <taxon>Arabidopsis</taxon>
    </lineage>
</organism>
<name>FBK40_ARATH</name>
<keyword id="KW-0880">Kelch repeat</keyword>
<keyword id="KW-1185">Reference proteome</keyword>
<keyword id="KW-0677">Repeat</keyword>
<accession>O82374</accession>
<proteinExistence type="predicted"/>
<sequence>MVVLHEILDGPNGDDPNNNPQEGEDNQNENPQEEVENLRNLLELPEELIERLIAHIPRCYYPYISLVSRDFRQVITSDKLFRTRSLLGFNEPVLYALIGSTQTPLSWFFLRWSNFPLELHRIRSLPTVLLGAAVVTIGYKMYVMGGTIGLNHHVSTVIVIDCRNHTWNYLPDMKRARYRAAAGEIGGRIYVIGGRKKQDADWVEVFNATTESWETVSSVCPNDASANGVFSTYVVMQGRIFALDRWGCFAYKPVQGLWQSWGVASELTRFWHPLSSFTVIGELLYTVDLTCSLGHPIVVYYPNESVWRPVMGFHLPILSQCWSKIANFGGKLVIFCTCLGTFKHILCIVIALEARQGGHIWGVVESNSRVFRDDMMLPYIRLCQTVTF</sequence>
<reference key="1">
    <citation type="journal article" date="1999" name="Nature">
        <title>Sequence and analysis of chromosome 2 of the plant Arabidopsis thaliana.</title>
        <authorList>
            <person name="Lin X."/>
            <person name="Kaul S."/>
            <person name="Rounsley S.D."/>
            <person name="Shea T.P."/>
            <person name="Benito M.-I."/>
            <person name="Town C.D."/>
            <person name="Fujii C.Y."/>
            <person name="Mason T.M."/>
            <person name="Bowman C.L."/>
            <person name="Barnstead M.E."/>
            <person name="Feldblyum T.V."/>
            <person name="Buell C.R."/>
            <person name="Ketchum K.A."/>
            <person name="Lee J.J."/>
            <person name="Ronning C.M."/>
            <person name="Koo H.L."/>
            <person name="Moffat K.S."/>
            <person name="Cronin L.A."/>
            <person name="Shen M."/>
            <person name="Pai G."/>
            <person name="Van Aken S."/>
            <person name="Umayam L."/>
            <person name="Tallon L.J."/>
            <person name="Gill J.E."/>
            <person name="Adams M.D."/>
            <person name="Carrera A.J."/>
            <person name="Creasy T.H."/>
            <person name="Goodman H.M."/>
            <person name="Somerville C.R."/>
            <person name="Copenhaver G.P."/>
            <person name="Preuss D."/>
            <person name="Nierman W.C."/>
            <person name="White O."/>
            <person name="Eisen J.A."/>
            <person name="Salzberg S.L."/>
            <person name="Fraser C.M."/>
            <person name="Venter J.C."/>
        </authorList>
    </citation>
    <scope>NUCLEOTIDE SEQUENCE [LARGE SCALE GENOMIC DNA]</scope>
    <source>
        <strain>cv. Columbia</strain>
    </source>
</reference>
<reference key="2">
    <citation type="journal article" date="2017" name="Plant J.">
        <title>Araport11: a complete reannotation of the Arabidopsis thaliana reference genome.</title>
        <authorList>
            <person name="Cheng C.Y."/>
            <person name="Krishnakumar V."/>
            <person name="Chan A.P."/>
            <person name="Thibaud-Nissen F."/>
            <person name="Schobel S."/>
            <person name="Town C.D."/>
        </authorList>
    </citation>
    <scope>GENOME REANNOTATION</scope>
    <source>
        <strain>cv. Columbia</strain>
    </source>
</reference>
<feature type="chain" id="PRO_0000283200" description="Putative F-box/kelch-repeat protein At2g29820">
    <location>
        <begin position="1"/>
        <end position="388"/>
    </location>
</feature>
<feature type="domain" description="F-box" evidence="1">
    <location>
        <begin position="38"/>
        <end position="84"/>
    </location>
</feature>
<feature type="repeat" description="Kelch 1">
    <location>
        <begin position="140"/>
        <end position="187"/>
    </location>
</feature>
<feature type="repeat" description="Kelch 2">
    <location>
        <begin position="189"/>
        <end position="233"/>
    </location>
</feature>
<feature type="region of interest" description="Disordered" evidence="2">
    <location>
        <begin position="6"/>
        <end position="33"/>
    </location>
</feature>
<feature type="compositionally biased region" description="Low complexity" evidence="2">
    <location>
        <begin position="9"/>
        <end position="21"/>
    </location>
</feature>
<feature type="compositionally biased region" description="Acidic residues" evidence="2">
    <location>
        <begin position="22"/>
        <end position="33"/>
    </location>
</feature>
<evidence type="ECO:0000255" key="1">
    <source>
        <dbReference type="PROSITE-ProRule" id="PRU00080"/>
    </source>
</evidence>
<evidence type="ECO:0000256" key="2">
    <source>
        <dbReference type="SAM" id="MobiDB-lite"/>
    </source>
</evidence>
<protein>
    <recommendedName>
        <fullName>Putative F-box/kelch-repeat protein At2g29820</fullName>
    </recommendedName>
</protein>